<comment type="function">
    <text evidence="1">Binds 16S rRNA, required for the assembly of 30S particles and may also be responsible for determining the conformation of the 16S rRNA at the A site.</text>
</comment>
<comment type="subunit">
    <text evidence="1">Part of the 30S ribosomal subunit. Contacts proteins S3 and S10.</text>
</comment>
<comment type="similarity">
    <text evidence="1">Belongs to the universal ribosomal protein uS14 family.</text>
</comment>
<accession>Q2IXP7</accession>
<sequence>MAKKSSIEKNNRRKKMTKNAAPKRARLKAIIADKDLPMEERFAATLKLAEMPRNSSATRIRNRCEITGRARSVYRLNKLSRIAIRDLGSKGLVPGLVKSSW</sequence>
<feature type="chain" id="PRO_1000128538" description="Small ribosomal subunit protein uS14">
    <location>
        <begin position="1"/>
        <end position="101"/>
    </location>
</feature>
<feature type="region of interest" description="Disordered" evidence="2">
    <location>
        <begin position="1"/>
        <end position="23"/>
    </location>
</feature>
<feature type="compositionally biased region" description="Basic and acidic residues" evidence="2">
    <location>
        <begin position="1"/>
        <end position="10"/>
    </location>
</feature>
<feature type="compositionally biased region" description="Basic residues" evidence="2">
    <location>
        <begin position="11"/>
        <end position="23"/>
    </location>
</feature>
<gene>
    <name evidence="1" type="primary">rpsN</name>
    <name type="ordered locus">RPB_2308</name>
</gene>
<proteinExistence type="inferred from homology"/>
<name>RS14_RHOP2</name>
<evidence type="ECO:0000255" key="1">
    <source>
        <dbReference type="HAMAP-Rule" id="MF_00537"/>
    </source>
</evidence>
<evidence type="ECO:0000256" key="2">
    <source>
        <dbReference type="SAM" id="MobiDB-lite"/>
    </source>
</evidence>
<evidence type="ECO:0000305" key="3"/>
<protein>
    <recommendedName>
        <fullName evidence="1">Small ribosomal subunit protein uS14</fullName>
    </recommendedName>
    <alternativeName>
        <fullName evidence="3">30S ribosomal protein S14</fullName>
    </alternativeName>
</protein>
<keyword id="KW-1185">Reference proteome</keyword>
<keyword id="KW-0687">Ribonucleoprotein</keyword>
<keyword id="KW-0689">Ribosomal protein</keyword>
<keyword id="KW-0694">RNA-binding</keyword>
<keyword id="KW-0699">rRNA-binding</keyword>
<dbReference type="EMBL" id="CP000250">
    <property type="protein sequence ID" value="ABD07013.1"/>
    <property type="molecule type" value="Genomic_DNA"/>
</dbReference>
<dbReference type="RefSeq" id="WP_011441198.1">
    <property type="nucleotide sequence ID" value="NC_007778.1"/>
</dbReference>
<dbReference type="SMR" id="Q2IXP7"/>
<dbReference type="STRING" id="316058.RPB_2308"/>
<dbReference type="KEGG" id="rpb:RPB_2308"/>
<dbReference type="eggNOG" id="COG0199">
    <property type="taxonomic scope" value="Bacteria"/>
</dbReference>
<dbReference type="HOGENOM" id="CLU_139869_0_1_5"/>
<dbReference type="OrthoDB" id="9810484at2"/>
<dbReference type="Proteomes" id="UP000008809">
    <property type="component" value="Chromosome"/>
</dbReference>
<dbReference type="GO" id="GO:0005737">
    <property type="term" value="C:cytoplasm"/>
    <property type="evidence" value="ECO:0007669"/>
    <property type="project" value="UniProtKB-ARBA"/>
</dbReference>
<dbReference type="GO" id="GO:0015935">
    <property type="term" value="C:small ribosomal subunit"/>
    <property type="evidence" value="ECO:0007669"/>
    <property type="project" value="TreeGrafter"/>
</dbReference>
<dbReference type="GO" id="GO:0019843">
    <property type="term" value="F:rRNA binding"/>
    <property type="evidence" value="ECO:0007669"/>
    <property type="project" value="UniProtKB-UniRule"/>
</dbReference>
<dbReference type="GO" id="GO:0003735">
    <property type="term" value="F:structural constituent of ribosome"/>
    <property type="evidence" value="ECO:0007669"/>
    <property type="project" value="InterPro"/>
</dbReference>
<dbReference type="GO" id="GO:0006412">
    <property type="term" value="P:translation"/>
    <property type="evidence" value="ECO:0007669"/>
    <property type="project" value="UniProtKB-UniRule"/>
</dbReference>
<dbReference type="FunFam" id="1.10.287.1480:FF:000001">
    <property type="entry name" value="30S ribosomal protein S14"/>
    <property type="match status" value="1"/>
</dbReference>
<dbReference type="Gene3D" id="1.10.287.1480">
    <property type="match status" value="1"/>
</dbReference>
<dbReference type="HAMAP" id="MF_00537">
    <property type="entry name" value="Ribosomal_uS14_1"/>
    <property type="match status" value="1"/>
</dbReference>
<dbReference type="InterPro" id="IPR001209">
    <property type="entry name" value="Ribosomal_uS14"/>
</dbReference>
<dbReference type="InterPro" id="IPR023036">
    <property type="entry name" value="Ribosomal_uS14_bac/plastid"/>
</dbReference>
<dbReference type="NCBIfam" id="NF006477">
    <property type="entry name" value="PRK08881.1"/>
    <property type="match status" value="1"/>
</dbReference>
<dbReference type="PANTHER" id="PTHR19836">
    <property type="entry name" value="30S RIBOSOMAL PROTEIN S14"/>
    <property type="match status" value="1"/>
</dbReference>
<dbReference type="PANTHER" id="PTHR19836:SF19">
    <property type="entry name" value="SMALL RIBOSOMAL SUBUNIT PROTEIN US14M"/>
    <property type="match status" value="1"/>
</dbReference>
<dbReference type="Pfam" id="PF00253">
    <property type="entry name" value="Ribosomal_S14"/>
    <property type="match status" value="1"/>
</dbReference>
<dbReference type="SUPFAM" id="SSF57716">
    <property type="entry name" value="Glucocorticoid receptor-like (DNA-binding domain)"/>
    <property type="match status" value="1"/>
</dbReference>
<organism>
    <name type="scientific">Rhodopseudomonas palustris (strain HaA2)</name>
    <dbReference type="NCBI Taxonomy" id="316058"/>
    <lineage>
        <taxon>Bacteria</taxon>
        <taxon>Pseudomonadati</taxon>
        <taxon>Pseudomonadota</taxon>
        <taxon>Alphaproteobacteria</taxon>
        <taxon>Hyphomicrobiales</taxon>
        <taxon>Nitrobacteraceae</taxon>
        <taxon>Rhodopseudomonas</taxon>
    </lineage>
</organism>
<reference key="1">
    <citation type="submission" date="2006-01" db="EMBL/GenBank/DDBJ databases">
        <title>Complete sequence of Rhodopseudomonas palustris HaA2.</title>
        <authorList>
            <consortium name="US DOE Joint Genome Institute"/>
            <person name="Copeland A."/>
            <person name="Lucas S."/>
            <person name="Lapidus A."/>
            <person name="Barry K."/>
            <person name="Detter J.C."/>
            <person name="Glavina T."/>
            <person name="Hammon N."/>
            <person name="Israni S."/>
            <person name="Pitluck S."/>
            <person name="Chain P."/>
            <person name="Malfatti S."/>
            <person name="Shin M."/>
            <person name="Vergez L."/>
            <person name="Schmutz J."/>
            <person name="Larimer F."/>
            <person name="Land M."/>
            <person name="Hauser L."/>
            <person name="Pelletier D.A."/>
            <person name="Kyrpides N."/>
            <person name="Anderson I."/>
            <person name="Oda Y."/>
            <person name="Harwood C.S."/>
            <person name="Richardson P."/>
        </authorList>
    </citation>
    <scope>NUCLEOTIDE SEQUENCE [LARGE SCALE GENOMIC DNA]</scope>
    <source>
        <strain>HaA2</strain>
    </source>
</reference>